<reference key="1">
    <citation type="submission" date="2009-03" db="EMBL/GenBank/DDBJ databases">
        <title>Brucella melitensis ATCC 23457 whole genome shotgun sequencing project.</title>
        <authorList>
            <person name="Setubal J.C."/>
            <person name="Boyle S."/>
            <person name="Crasta O.R."/>
            <person name="Gillespie J.J."/>
            <person name="Kenyon R.W."/>
            <person name="Lu J."/>
            <person name="Mane S."/>
            <person name="Nagrani S."/>
            <person name="Shallom J.M."/>
            <person name="Shallom S."/>
            <person name="Shukla M."/>
            <person name="Snyder E.E."/>
            <person name="Sobral B.W."/>
            <person name="Wattam A.R."/>
            <person name="Will R."/>
            <person name="Williams K."/>
            <person name="Yoo H."/>
            <person name="Munk C."/>
            <person name="Tapia R."/>
            <person name="Han C."/>
            <person name="Detter J.C."/>
            <person name="Bruce D."/>
            <person name="Brettin T.S."/>
        </authorList>
    </citation>
    <scope>NUCLEOTIDE SEQUENCE [LARGE SCALE GENOMIC DNA]</scope>
    <source>
        <strain>ATCC 23457</strain>
    </source>
</reference>
<accession>C0RI52</accession>
<gene>
    <name evidence="1" type="primary">purM</name>
    <name type="ordered locus">BMEA_A0748</name>
</gene>
<feature type="chain" id="PRO_1000148271" description="Phosphoribosylformylglycinamidine cyclo-ligase">
    <location>
        <begin position="1"/>
        <end position="359"/>
    </location>
</feature>
<organism>
    <name type="scientific">Brucella melitensis biotype 2 (strain ATCC 23457)</name>
    <dbReference type="NCBI Taxonomy" id="546272"/>
    <lineage>
        <taxon>Bacteria</taxon>
        <taxon>Pseudomonadati</taxon>
        <taxon>Pseudomonadota</taxon>
        <taxon>Alphaproteobacteria</taxon>
        <taxon>Hyphomicrobiales</taxon>
        <taxon>Brucellaceae</taxon>
        <taxon>Brucella/Ochrobactrum group</taxon>
        <taxon>Brucella</taxon>
    </lineage>
</organism>
<dbReference type="EC" id="6.3.3.1" evidence="1"/>
<dbReference type="EMBL" id="CP001488">
    <property type="protein sequence ID" value="ACO00510.1"/>
    <property type="molecule type" value="Genomic_DNA"/>
</dbReference>
<dbReference type="RefSeq" id="WP_004683486.1">
    <property type="nucleotide sequence ID" value="NC_012441.1"/>
</dbReference>
<dbReference type="SMR" id="C0RI52"/>
<dbReference type="GeneID" id="29594092"/>
<dbReference type="KEGG" id="bmi:BMEA_A0748"/>
<dbReference type="HOGENOM" id="CLU_047116_0_0_5"/>
<dbReference type="UniPathway" id="UPA00074">
    <property type="reaction ID" value="UER00129"/>
</dbReference>
<dbReference type="PRO" id="PR:C0RI52"/>
<dbReference type="Proteomes" id="UP000001748">
    <property type="component" value="Chromosome I"/>
</dbReference>
<dbReference type="GO" id="GO:0005829">
    <property type="term" value="C:cytosol"/>
    <property type="evidence" value="ECO:0007669"/>
    <property type="project" value="TreeGrafter"/>
</dbReference>
<dbReference type="GO" id="GO:0005524">
    <property type="term" value="F:ATP binding"/>
    <property type="evidence" value="ECO:0007669"/>
    <property type="project" value="UniProtKB-KW"/>
</dbReference>
<dbReference type="GO" id="GO:0004637">
    <property type="term" value="F:phosphoribosylamine-glycine ligase activity"/>
    <property type="evidence" value="ECO:0007669"/>
    <property type="project" value="TreeGrafter"/>
</dbReference>
<dbReference type="GO" id="GO:0004641">
    <property type="term" value="F:phosphoribosylformylglycinamidine cyclo-ligase activity"/>
    <property type="evidence" value="ECO:0007669"/>
    <property type="project" value="UniProtKB-UniRule"/>
</dbReference>
<dbReference type="GO" id="GO:0006189">
    <property type="term" value="P:'de novo' IMP biosynthetic process"/>
    <property type="evidence" value="ECO:0007669"/>
    <property type="project" value="UniProtKB-UniRule"/>
</dbReference>
<dbReference type="GO" id="GO:0046084">
    <property type="term" value="P:adenine biosynthetic process"/>
    <property type="evidence" value="ECO:0007669"/>
    <property type="project" value="TreeGrafter"/>
</dbReference>
<dbReference type="CDD" id="cd02196">
    <property type="entry name" value="PurM"/>
    <property type="match status" value="1"/>
</dbReference>
<dbReference type="FunFam" id="3.30.1330.10:FF:000001">
    <property type="entry name" value="Phosphoribosylformylglycinamidine cyclo-ligase"/>
    <property type="match status" value="1"/>
</dbReference>
<dbReference type="FunFam" id="3.90.650.10:FF:000019">
    <property type="entry name" value="Trifunctional purine biosynthetic protein adenosine-3"/>
    <property type="match status" value="1"/>
</dbReference>
<dbReference type="Gene3D" id="3.90.650.10">
    <property type="entry name" value="PurM-like C-terminal domain"/>
    <property type="match status" value="1"/>
</dbReference>
<dbReference type="Gene3D" id="3.30.1330.10">
    <property type="entry name" value="PurM-like, N-terminal domain"/>
    <property type="match status" value="1"/>
</dbReference>
<dbReference type="HAMAP" id="MF_00741">
    <property type="entry name" value="AIRS"/>
    <property type="match status" value="1"/>
</dbReference>
<dbReference type="InterPro" id="IPR010918">
    <property type="entry name" value="PurM-like_C_dom"/>
</dbReference>
<dbReference type="InterPro" id="IPR036676">
    <property type="entry name" value="PurM-like_C_sf"/>
</dbReference>
<dbReference type="InterPro" id="IPR016188">
    <property type="entry name" value="PurM-like_N"/>
</dbReference>
<dbReference type="InterPro" id="IPR036921">
    <property type="entry name" value="PurM-like_N_sf"/>
</dbReference>
<dbReference type="InterPro" id="IPR004733">
    <property type="entry name" value="PurM_cligase"/>
</dbReference>
<dbReference type="NCBIfam" id="TIGR00878">
    <property type="entry name" value="purM"/>
    <property type="match status" value="1"/>
</dbReference>
<dbReference type="PANTHER" id="PTHR10520:SF12">
    <property type="entry name" value="TRIFUNCTIONAL PURINE BIOSYNTHETIC PROTEIN ADENOSINE-3"/>
    <property type="match status" value="1"/>
</dbReference>
<dbReference type="PANTHER" id="PTHR10520">
    <property type="entry name" value="TRIFUNCTIONAL PURINE BIOSYNTHETIC PROTEIN ADENOSINE-3-RELATED"/>
    <property type="match status" value="1"/>
</dbReference>
<dbReference type="Pfam" id="PF00586">
    <property type="entry name" value="AIRS"/>
    <property type="match status" value="1"/>
</dbReference>
<dbReference type="Pfam" id="PF02769">
    <property type="entry name" value="AIRS_C"/>
    <property type="match status" value="1"/>
</dbReference>
<dbReference type="SUPFAM" id="SSF56042">
    <property type="entry name" value="PurM C-terminal domain-like"/>
    <property type="match status" value="1"/>
</dbReference>
<dbReference type="SUPFAM" id="SSF55326">
    <property type="entry name" value="PurM N-terminal domain-like"/>
    <property type="match status" value="1"/>
</dbReference>
<evidence type="ECO:0000255" key="1">
    <source>
        <dbReference type="HAMAP-Rule" id="MF_00741"/>
    </source>
</evidence>
<comment type="catalytic activity">
    <reaction evidence="1">
        <text>2-formamido-N(1)-(5-O-phospho-beta-D-ribosyl)acetamidine + ATP = 5-amino-1-(5-phospho-beta-D-ribosyl)imidazole + ADP + phosphate + H(+)</text>
        <dbReference type="Rhea" id="RHEA:23032"/>
        <dbReference type="ChEBI" id="CHEBI:15378"/>
        <dbReference type="ChEBI" id="CHEBI:30616"/>
        <dbReference type="ChEBI" id="CHEBI:43474"/>
        <dbReference type="ChEBI" id="CHEBI:137981"/>
        <dbReference type="ChEBI" id="CHEBI:147287"/>
        <dbReference type="ChEBI" id="CHEBI:456216"/>
        <dbReference type="EC" id="6.3.3.1"/>
    </reaction>
</comment>
<comment type="pathway">
    <text evidence="1">Purine metabolism; IMP biosynthesis via de novo pathway; 5-amino-1-(5-phospho-D-ribosyl)imidazole from N(2)-formyl-N(1)-(5-phospho-D-ribosyl)glycinamide: step 2/2.</text>
</comment>
<comment type="subcellular location">
    <subcellularLocation>
        <location evidence="1">Cytoplasm</location>
    </subcellularLocation>
</comment>
<comment type="similarity">
    <text evidence="1">Belongs to the AIR synthase family.</text>
</comment>
<name>PUR5_BRUMB</name>
<sequence length="359" mass="37389">MTMENKPAGQNGLTYAQAGVDIDAGNLMVEKIKPLVRSTRRPGADGEIGGFGGLFDLKAAGFKGPVLVAANDGVGTKLKIAIDADIHDTVGIDLVAMCVNDLVVQGAEPLFFLDYYATGKLSPDQGVAIVSGIAEGCRQAGCALIGGETAEMPGMYRDGDYDLAGFAVGAAERDRLLPRGDIAEGDIILGLASSGVHSNGFSLVRRIVELSGLGWKSQAPFQPGATLGEALLTPTRIYVKPLLAAIRACDGIKALAHITGGGFPDNIPRVLPKGLAAEIDLPAIAVPPVFSWLAKTGNVEPNEMLRTFNCGIGMIAVVNPAKVDEVIAALAAEGEKVVTLGRMTRREKDGVIYKGQLAL</sequence>
<keyword id="KW-0067">ATP-binding</keyword>
<keyword id="KW-0963">Cytoplasm</keyword>
<keyword id="KW-0436">Ligase</keyword>
<keyword id="KW-0547">Nucleotide-binding</keyword>
<keyword id="KW-0658">Purine biosynthesis</keyword>
<protein>
    <recommendedName>
        <fullName evidence="1">Phosphoribosylformylglycinamidine cyclo-ligase</fullName>
        <ecNumber evidence="1">6.3.3.1</ecNumber>
    </recommendedName>
    <alternativeName>
        <fullName evidence="1">AIR synthase</fullName>
    </alternativeName>
    <alternativeName>
        <fullName evidence="1">AIRS</fullName>
    </alternativeName>
    <alternativeName>
        <fullName evidence="1">Phosphoribosyl-aminoimidazole synthetase</fullName>
    </alternativeName>
</protein>
<proteinExistence type="inferred from homology"/>